<organism>
    <name type="scientific">Shigella flexneri</name>
    <dbReference type="NCBI Taxonomy" id="623"/>
    <lineage>
        <taxon>Bacteria</taxon>
        <taxon>Pseudomonadati</taxon>
        <taxon>Pseudomonadota</taxon>
        <taxon>Gammaproteobacteria</taxon>
        <taxon>Enterobacterales</taxon>
        <taxon>Enterobacteriaceae</taxon>
        <taxon>Shigella</taxon>
    </lineage>
</organism>
<evidence type="ECO:0000255" key="1">
    <source>
        <dbReference type="HAMAP-Rule" id="MF_00142"/>
    </source>
</evidence>
<sequence>MNDSEFHRLADQLWLTIEERLDDRDGDSDIDCEINGGVLTITFENGSKIIINRQEPLHQVWLATKQGGYHFDLKGDEWICDRSGETFWDLLEQAATQQAGETVSFR</sequence>
<accession>Q83IX2</accession>
<keyword id="KW-0408">Iron</keyword>
<keyword id="KW-0479">Metal-binding</keyword>
<keyword id="KW-1185">Reference proteome</keyword>
<dbReference type="EMBL" id="AE005674">
    <property type="protein sequence ID" value="AAN45316.1"/>
    <property type="molecule type" value="Genomic_DNA"/>
</dbReference>
<dbReference type="EMBL" id="AE014073">
    <property type="protein sequence ID" value="AAP18882.1"/>
    <property type="molecule type" value="Genomic_DNA"/>
</dbReference>
<dbReference type="RefSeq" id="NP_709609.1">
    <property type="nucleotide sequence ID" value="NC_004337.2"/>
</dbReference>
<dbReference type="RefSeq" id="WP_000999940.1">
    <property type="nucleotide sequence ID" value="NZ_WPGW01000140.1"/>
</dbReference>
<dbReference type="SMR" id="Q83IX2"/>
<dbReference type="STRING" id="198214.SF3880"/>
<dbReference type="PaxDb" id="198214-SF3880"/>
<dbReference type="GeneID" id="1027573"/>
<dbReference type="KEGG" id="sfl:SF3880"/>
<dbReference type="KEGG" id="sfx:S3876"/>
<dbReference type="PATRIC" id="fig|198214.7.peg.4574"/>
<dbReference type="HOGENOM" id="CLU_080880_3_0_6"/>
<dbReference type="Proteomes" id="UP000001006">
    <property type="component" value="Chromosome"/>
</dbReference>
<dbReference type="Proteomes" id="UP000002673">
    <property type="component" value="Chromosome"/>
</dbReference>
<dbReference type="GO" id="GO:0005829">
    <property type="term" value="C:cytosol"/>
    <property type="evidence" value="ECO:0007669"/>
    <property type="project" value="TreeGrafter"/>
</dbReference>
<dbReference type="GO" id="GO:0008199">
    <property type="term" value="F:ferric iron binding"/>
    <property type="evidence" value="ECO:0007669"/>
    <property type="project" value="InterPro"/>
</dbReference>
<dbReference type="GO" id="GO:0008198">
    <property type="term" value="F:ferrous iron binding"/>
    <property type="evidence" value="ECO:0007669"/>
    <property type="project" value="TreeGrafter"/>
</dbReference>
<dbReference type="GO" id="GO:0016226">
    <property type="term" value="P:iron-sulfur cluster assembly"/>
    <property type="evidence" value="ECO:0007669"/>
    <property type="project" value="UniProtKB-UniRule"/>
</dbReference>
<dbReference type="CDD" id="cd00503">
    <property type="entry name" value="Frataxin"/>
    <property type="match status" value="1"/>
</dbReference>
<dbReference type="FunFam" id="3.30.920.10:FF:000001">
    <property type="entry name" value="Iron-sulfur cluster assembly protein CyaY"/>
    <property type="match status" value="1"/>
</dbReference>
<dbReference type="Gene3D" id="3.30.920.10">
    <property type="entry name" value="Frataxin/CyaY"/>
    <property type="match status" value="1"/>
</dbReference>
<dbReference type="HAMAP" id="MF_00142">
    <property type="entry name" value="CyaY"/>
    <property type="match status" value="1"/>
</dbReference>
<dbReference type="InterPro" id="IPR047584">
    <property type="entry name" value="CyaY"/>
</dbReference>
<dbReference type="InterPro" id="IPR002908">
    <property type="entry name" value="Frataxin/CyaY"/>
</dbReference>
<dbReference type="InterPro" id="IPR036524">
    <property type="entry name" value="Frataxin/CyaY_sf"/>
</dbReference>
<dbReference type="InterPro" id="IPR020895">
    <property type="entry name" value="Frataxin_CS"/>
</dbReference>
<dbReference type="NCBIfam" id="TIGR03421">
    <property type="entry name" value="FeS_CyaY"/>
    <property type="match status" value="1"/>
</dbReference>
<dbReference type="PANTHER" id="PTHR16821">
    <property type="entry name" value="FRATAXIN"/>
    <property type="match status" value="1"/>
</dbReference>
<dbReference type="PANTHER" id="PTHR16821:SF2">
    <property type="entry name" value="FRATAXIN, MITOCHONDRIAL"/>
    <property type="match status" value="1"/>
</dbReference>
<dbReference type="Pfam" id="PF01491">
    <property type="entry name" value="Frataxin_Cyay"/>
    <property type="match status" value="1"/>
</dbReference>
<dbReference type="SMART" id="SM01219">
    <property type="entry name" value="Frataxin_Cyay"/>
    <property type="match status" value="1"/>
</dbReference>
<dbReference type="SUPFAM" id="SSF55387">
    <property type="entry name" value="Frataxin/Nqo15-like"/>
    <property type="match status" value="1"/>
</dbReference>
<dbReference type="PROSITE" id="PS01344">
    <property type="entry name" value="FRATAXIN_1"/>
    <property type="match status" value="1"/>
</dbReference>
<dbReference type="PROSITE" id="PS50810">
    <property type="entry name" value="FRATAXIN_2"/>
    <property type="match status" value="1"/>
</dbReference>
<gene>
    <name evidence="1" type="primary">cyaY</name>
    <name type="ordered locus">SF3878.1</name>
    <name type="ordered locus">S3876</name>
</gene>
<comment type="function">
    <text evidence="1">Involved in iron-sulfur (Fe-S) cluster assembly. May act as a regulator of Fe-S biogenesis.</text>
</comment>
<comment type="similarity">
    <text evidence="1">Belongs to the frataxin family.</text>
</comment>
<feature type="chain" id="PRO_0000193963" description="Iron-sulfur cluster assembly protein CyaY">
    <location>
        <begin position="1"/>
        <end position="106"/>
    </location>
</feature>
<proteinExistence type="inferred from homology"/>
<reference key="1">
    <citation type="journal article" date="2002" name="Nucleic Acids Res.">
        <title>Genome sequence of Shigella flexneri 2a: insights into pathogenicity through comparison with genomes of Escherichia coli K12 and O157.</title>
        <authorList>
            <person name="Jin Q."/>
            <person name="Yuan Z."/>
            <person name="Xu J."/>
            <person name="Wang Y."/>
            <person name="Shen Y."/>
            <person name="Lu W."/>
            <person name="Wang J."/>
            <person name="Liu H."/>
            <person name="Yang J."/>
            <person name="Yang F."/>
            <person name="Zhang X."/>
            <person name="Zhang J."/>
            <person name="Yang G."/>
            <person name="Wu H."/>
            <person name="Qu D."/>
            <person name="Dong J."/>
            <person name="Sun L."/>
            <person name="Xue Y."/>
            <person name="Zhao A."/>
            <person name="Gao Y."/>
            <person name="Zhu J."/>
            <person name="Kan B."/>
            <person name="Ding K."/>
            <person name="Chen S."/>
            <person name="Cheng H."/>
            <person name="Yao Z."/>
            <person name="He B."/>
            <person name="Chen R."/>
            <person name="Ma D."/>
            <person name="Qiang B."/>
            <person name="Wen Y."/>
            <person name="Hou Y."/>
            <person name="Yu J."/>
        </authorList>
    </citation>
    <scope>NUCLEOTIDE SEQUENCE [LARGE SCALE GENOMIC DNA]</scope>
    <source>
        <strain>301 / Serotype 2a</strain>
    </source>
</reference>
<reference key="2">
    <citation type="journal article" date="2003" name="Infect. Immun.">
        <title>Complete genome sequence and comparative genomics of Shigella flexneri serotype 2a strain 2457T.</title>
        <authorList>
            <person name="Wei J."/>
            <person name="Goldberg M.B."/>
            <person name="Burland V."/>
            <person name="Venkatesan M.M."/>
            <person name="Deng W."/>
            <person name="Fournier G."/>
            <person name="Mayhew G.F."/>
            <person name="Plunkett G. III"/>
            <person name="Rose D.J."/>
            <person name="Darling A."/>
            <person name="Mau B."/>
            <person name="Perna N.T."/>
            <person name="Payne S.M."/>
            <person name="Runyen-Janecky L.J."/>
            <person name="Zhou S."/>
            <person name="Schwartz D.C."/>
            <person name="Blattner F.R."/>
        </authorList>
    </citation>
    <scope>NUCLEOTIDE SEQUENCE [LARGE SCALE GENOMIC DNA]</scope>
    <source>
        <strain>ATCC 700930 / 2457T / Serotype 2a</strain>
    </source>
</reference>
<name>CYAY_SHIFL</name>
<protein>
    <recommendedName>
        <fullName evidence="1">Iron-sulfur cluster assembly protein CyaY</fullName>
    </recommendedName>
</protein>